<reference key="1">
    <citation type="journal article" date="1987" name="EMBO J.">
        <title>Nucleoplasmin cDNA sequence reveals polyglutamic acid tracts and a cluster of sequences homologous to putative nuclear localization signals.</title>
        <authorList>
            <person name="Dingwall C."/>
            <person name="Dilworth S.M."/>
            <person name="Black S.J."/>
            <person name="Kearsey S.E."/>
            <person name="Cox L.S."/>
            <person name="Laskey R.A."/>
        </authorList>
    </citation>
    <scope>NUCLEOTIDE SEQUENCE [MRNA]</scope>
</reference>
<reference key="2">
    <citation type="journal article" date="1987" name="Genes Dev.">
        <title>Cloning of nucleoplasmin from Xenopus laevis oocytes and analysis of its developmental expression.</title>
        <authorList>
            <person name="Buerglin T.R."/>
            <person name="Mattaj I.W."/>
            <person name="Newmeyer D.D."/>
            <person name="Zeller R."/>
            <person name="De Robertis E.M."/>
        </authorList>
    </citation>
    <scope>NUCLEOTIDE SEQUENCE [MRNA] OF 7-200</scope>
</reference>
<reference key="3">
    <citation type="journal article" date="2007" name="J. Biol. Chem.">
        <title>Phosphorylation of both nucleoplasmin domains is required for activation of its chromatin decondensation activity.</title>
        <authorList>
            <person name="Banuelos S."/>
            <person name="Omaetxebarria M.J."/>
            <person name="Ramos I."/>
            <person name="Larsen M.R."/>
            <person name="Arregi I."/>
            <person name="Jensen O.N."/>
            <person name="Arizmendi J.M."/>
            <person name="Prado A."/>
            <person name="Muga A."/>
        </authorList>
    </citation>
    <scope>FUNCTION</scope>
    <scope>ACETYLATION AT ALA-2</scope>
    <scope>PHOSPHORYLATION AT SER-3; THR-4; SER-6; THR-8; SER-149; SER-177; SER-178 AND SER-182</scope>
</reference>
<reference key="4">
    <citation type="journal article" date="2011" name="J. Biol. Chem.">
        <title>Protein arginine methyltransferase Prmt5-Mep50 methylates histones H2A and H4 and the histone chaperone nucleoplasmin in Xenopus laevis eggs.</title>
        <authorList>
            <person name="Wilczek C."/>
            <person name="Chitta R."/>
            <person name="Woo E."/>
            <person name="Shabanowitz J."/>
            <person name="Chait B.T."/>
            <person name="Hunt D.F."/>
            <person name="Shechter D."/>
        </authorList>
    </citation>
    <scope>INTERACTION WITH PRMT5 AND WDR77</scope>
    <scope>MUTAGENESIS OF ARG-192 AND ARG-194</scope>
    <scope>IDENTIFICATION BY MASS SPECTROMETRY</scope>
    <scope>METHYLATION AT ARG-192</scope>
</reference>
<reference key="5">
    <citation type="journal article" date="2000" name="Structure">
        <title>Crystallographic analysis of the specific yet versatile recognition of distinct nuclear localization signals by karyopherin alpha.</title>
        <authorList>
            <person name="Conti E."/>
            <person name="Kuriyan J."/>
        </authorList>
    </citation>
    <scope>X-RAY CRYSTALLOGRAPHY (2.4 ANGSTROMS) OF 153-171 IN COMPLEX WITH KARYOPHERIN ALPHA</scope>
    <scope>NUCLEAR LOCALIZATION SIGNAL</scope>
</reference>
<reference key="6">
    <citation type="journal article" date="2001" name="Mol. Cell">
        <title>The crystal structure of nucleoplasmin-core: implications for histone binding and nucleosome assembly.</title>
        <authorList>
            <person name="Dutta S."/>
            <person name="Akey I.V."/>
            <person name="Dingwall C."/>
            <person name="Hartman K.L."/>
            <person name="Laue T."/>
            <person name="Nolte R.T."/>
            <person name="Head J.F."/>
            <person name="Akey C.W."/>
        </authorList>
    </citation>
    <scope>X-RAY CRYSTALLOGRAPHY (2.3 ANGSTROMS) OF 1-124</scope>
    <scope>FUNCTION</scope>
    <scope>SUBUNIT</scope>
</reference>
<reference key="7">
    <citation type="journal article" date="2008" name="Biochemistry">
        <title>Activation of nucleoplasmin, an oligomeric histone chaperone, challenges its stability.</title>
        <authorList>
            <person name="Taneva S.G."/>
            <person name="Munoz I.G."/>
            <person name="Franco G."/>
            <person name="Falces J."/>
            <person name="Arregi I."/>
            <person name="Muga A."/>
            <person name="Montoya G."/>
            <person name="Urbaneja M.A."/>
            <person name="Banuelos S."/>
        </authorList>
    </citation>
    <scope>X-RAY CRYSTALLOGRAPHY (2.5 ANGSTROMS) OF 10-120</scope>
    <scope>FUNCTION</scope>
    <scope>SUBUNIT</scope>
    <scope>PHOSPHORYLATION</scope>
</reference>
<organism>
    <name type="scientific">Xenopus laevis</name>
    <name type="common">African clawed frog</name>
    <dbReference type="NCBI Taxonomy" id="8355"/>
    <lineage>
        <taxon>Eukaryota</taxon>
        <taxon>Metazoa</taxon>
        <taxon>Chordata</taxon>
        <taxon>Craniata</taxon>
        <taxon>Vertebrata</taxon>
        <taxon>Euteleostomi</taxon>
        <taxon>Amphibia</taxon>
        <taxon>Batrachia</taxon>
        <taxon>Anura</taxon>
        <taxon>Pipoidea</taxon>
        <taxon>Pipidae</taxon>
        <taxon>Xenopodinae</taxon>
        <taxon>Xenopus</taxon>
        <taxon>Xenopus</taxon>
    </lineage>
</organism>
<protein>
    <recommendedName>
        <fullName>Nucleoplasmin</fullName>
    </recommendedName>
</protein>
<comment type="function">
    <text evidence="1 4 5 6">Acts as a chaperone for histones, such as histone H2A-H2B, and thus regulates the assembly of nucleosome cores (PubMed:11684019, PubMed:19055325). Involved in chromatin remodeling, especially during fertilization and early embryonic development (By similarity). May be involved in sperm chromatin decondensation during fertilization (PubMed:17510054).</text>
</comment>
<comment type="biophysicochemical properties">
    <temperatureDependence>
        <text>Thermostable.</text>
    </temperatureDependence>
</comment>
<comment type="subunit">
    <text evidence="3 4 6 7">Homopentamer, when bound to H2A-H2B dimers only. Homodecamer of two stacked pentamers, when bound to H2A-H2B dimers and H3-H4 tetramers simultaneously. Interacts with the heterotetramer formed by wdr77 and prmt5.</text>
</comment>
<comment type="interaction">
    <interactant intactId="EBI-7261813">
        <id>P05221</id>
    </interactant>
    <interactant intactId="EBI-1797">
        <id>Q02821</id>
        <label>SRP1</label>
    </interactant>
    <organismsDiffer>true</organismsDiffer>
    <experiments>2</experiments>
</comment>
<comment type="subcellular location">
    <subcellularLocation>
        <location>Nucleus</location>
    </subcellularLocation>
</comment>
<comment type="PTM">
    <text evidence="5 6">Activated by phosphorylation of multiple serine/threonine residues, along both core and tail domains. The level of phosphorylation gradually increases during egg maturation, reaching an average of 7-10 phosphates per monomer, so that at the time of fertilization the activity of the protein is maximum.</text>
</comment>
<comment type="PTM">
    <text evidence="7">Methylated by prmt5, yielding both monomethylated and symmetrically dimethylated Arg-192.</text>
</comment>
<comment type="similarity">
    <text evidence="9">Belongs to the nucleoplasmin family.</text>
</comment>
<accession>P05221</accession>
<evidence type="ECO:0000250" key="1">
    <source>
        <dbReference type="UniProtKB" id="Q86SE8"/>
    </source>
</evidence>
<evidence type="ECO:0000256" key="2">
    <source>
        <dbReference type="SAM" id="MobiDB-lite"/>
    </source>
</evidence>
<evidence type="ECO:0000269" key="3">
    <source>
    </source>
</evidence>
<evidence type="ECO:0000269" key="4">
    <source>
    </source>
</evidence>
<evidence type="ECO:0000269" key="5">
    <source>
    </source>
</evidence>
<evidence type="ECO:0000269" key="6">
    <source>
    </source>
</evidence>
<evidence type="ECO:0000269" key="7">
    <source>
    </source>
</evidence>
<evidence type="ECO:0000303" key="8">
    <source>
    </source>
</evidence>
<evidence type="ECO:0000305" key="9"/>
<evidence type="ECO:0007829" key="10">
    <source>
        <dbReference type="PDB" id="1K5J"/>
    </source>
</evidence>
<name>NUPL_XENLA</name>
<proteinExistence type="evidence at protein level"/>
<dbReference type="EMBL" id="X04766">
    <property type="protein sequence ID" value="CAA28460.1"/>
    <property type="molecule type" value="mRNA"/>
</dbReference>
<dbReference type="EMBL" id="Y00204">
    <property type="protein sequence ID" value="CAA68363.1"/>
    <property type="molecule type" value="mRNA"/>
</dbReference>
<dbReference type="PIR" id="A26169">
    <property type="entry name" value="A26169"/>
</dbReference>
<dbReference type="PIR" id="A26630">
    <property type="entry name" value="A26630"/>
</dbReference>
<dbReference type="PDB" id="1EE5">
    <property type="method" value="X-ray"/>
    <property type="resolution" value="2.40 A"/>
    <property type="chains" value="B=153-171"/>
</dbReference>
<dbReference type="PDB" id="1EJY">
    <property type="method" value="X-ray"/>
    <property type="resolution" value="2.90 A"/>
    <property type="chains" value="N=155-170"/>
</dbReference>
<dbReference type="PDB" id="1K5J">
    <property type="method" value="X-ray"/>
    <property type="resolution" value="2.30 A"/>
    <property type="chains" value="A/B/C/D/E=1-124"/>
</dbReference>
<dbReference type="PDB" id="2VTX">
    <property type="method" value="X-ray"/>
    <property type="resolution" value="2.50 A"/>
    <property type="chains" value="A/B/C/D/E/G/H/I/J/K=1-120"/>
</dbReference>
<dbReference type="PDB" id="3UL1">
    <property type="method" value="X-ray"/>
    <property type="resolution" value="1.90 A"/>
    <property type="chains" value="A=153-172"/>
</dbReference>
<dbReference type="PDB" id="4BPL">
    <property type="method" value="X-ray"/>
    <property type="resolution" value="2.30 A"/>
    <property type="chains" value="B=153-172"/>
</dbReference>
<dbReference type="PDBsum" id="1EE5"/>
<dbReference type="PDBsum" id="1EJY"/>
<dbReference type="PDBsum" id="1K5J"/>
<dbReference type="PDBsum" id="2VTX"/>
<dbReference type="PDBsum" id="3UL1"/>
<dbReference type="PDBsum" id="4BPL"/>
<dbReference type="SMR" id="P05221"/>
<dbReference type="DIP" id="DIP-48470N"/>
<dbReference type="ELM" id="P05221"/>
<dbReference type="IntAct" id="P05221">
    <property type="interactions" value="2"/>
</dbReference>
<dbReference type="MINT" id="P05221"/>
<dbReference type="iPTMnet" id="P05221"/>
<dbReference type="ABCD" id="P05221">
    <property type="antibodies" value="1 sequenced antibody"/>
</dbReference>
<dbReference type="EvolutionaryTrace" id="P05221"/>
<dbReference type="Proteomes" id="UP000186698">
    <property type="component" value="Unplaced"/>
</dbReference>
<dbReference type="GO" id="GO:0005737">
    <property type="term" value="C:cytoplasm"/>
    <property type="evidence" value="ECO:0000318"/>
    <property type="project" value="GO_Central"/>
</dbReference>
<dbReference type="GO" id="GO:0005730">
    <property type="term" value="C:nucleolus"/>
    <property type="evidence" value="ECO:0000318"/>
    <property type="project" value="GO_Central"/>
</dbReference>
<dbReference type="GO" id="GO:0005654">
    <property type="term" value="C:nucleoplasm"/>
    <property type="evidence" value="ECO:0000314"/>
    <property type="project" value="CAFA"/>
</dbReference>
<dbReference type="GO" id="GO:0003682">
    <property type="term" value="F:chromatin binding"/>
    <property type="evidence" value="ECO:0000318"/>
    <property type="project" value="GO_Central"/>
</dbReference>
<dbReference type="GO" id="GO:0042393">
    <property type="term" value="F:histone binding"/>
    <property type="evidence" value="ECO:0000318"/>
    <property type="project" value="GO_Central"/>
</dbReference>
<dbReference type="GO" id="GO:0140713">
    <property type="term" value="F:histone chaperone activity"/>
    <property type="evidence" value="ECO:0000314"/>
    <property type="project" value="GO_Central"/>
</dbReference>
<dbReference type="GO" id="GO:0061676">
    <property type="term" value="F:importin-alpha family protein binding"/>
    <property type="evidence" value="ECO:0000269"/>
    <property type="project" value="DisProt"/>
</dbReference>
<dbReference type="GO" id="GO:0031491">
    <property type="term" value="F:nucleosome binding"/>
    <property type="evidence" value="ECO:0000315"/>
    <property type="project" value="CAFA"/>
</dbReference>
<dbReference type="GO" id="GO:0003723">
    <property type="term" value="F:RNA binding"/>
    <property type="evidence" value="ECO:0000318"/>
    <property type="project" value="GO_Central"/>
</dbReference>
<dbReference type="GO" id="GO:0006338">
    <property type="term" value="P:chromatin remodeling"/>
    <property type="evidence" value="ECO:0000318"/>
    <property type="project" value="GO_Central"/>
</dbReference>
<dbReference type="GO" id="GO:0045740">
    <property type="term" value="P:positive regulation of DNA replication"/>
    <property type="evidence" value="ECO:0000318"/>
    <property type="project" value="GO_Central"/>
</dbReference>
<dbReference type="GO" id="GO:0035041">
    <property type="term" value="P:sperm DNA decondensation"/>
    <property type="evidence" value="ECO:0000315"/>
    <property type="project" value="CAFA"/>
</dbReference>
<dbReference type="DisProt" id="DP00217"/>
<dbReference type="FunFam" id="2.60.120.340:FF:000003">
    <property type="entry name" value="Nucleoplasmin 2"/>
    <property type="match status" value="1"/>
</dbReference>
<dbReference type="Gene3D" id="2.60.120.340">
    <property type="entry name" value="Nucleoplasmin core domain"/>
    <property type="match status" value="1"/>
</dbReference>
<dbReference type="IDEAL" id="IID50001"/>
<dbReference type="InterPro" id="IPR004301">
    <property type="entry name" value="Nucleoplasmin"/>
</dbReference>
<dbReference type="InterPro" id="IPR024057">
    <property type="entry name" value="Nucleoplasmin_core_dom"/>
</dbReference>
<dbReference type="InterPro" id="IPR036824">
    <property type="entry name" value="Nucleoplasmin_core_dom_sf"/>
</dbReference>
<dbReference type="PANTHER" id="PTHR22747">
    <property type="entry name" value="NUCLEOPLASMIN"/>
    <property type="match status" value="1"/>
</dbReference>
<dbReference type="PANTHER" id="PTHR22747:SF14">
    <property type="entry name" value="NUCLEOPLASMIN-2"/>
    <property type="match status" value="1"/>
</dbReference>
<dbReference type="Pfam" id="PF03066">
    <property type="entry name" value="Nucleoplasmin"/>
    <property type="match status" value="1"/>
</dbReference>
<dbReference type="SUPFAM" id="SSF69203">
    <property type="entry name" value="Nucleoplasmin-like core domain"/>
    <property type="match status" value="1"/>
</dbReference>
<feature type="initiator methionine" description="Removed" evidence="5">
    <location>
        <position position="1"/>
    </location>
</feature>
<feature type="chain" id="PRO_0000219486" description="Nucleoplasmin">
    <location>
        <begin position="2"/>
        <end position="200"/>
    </location>
</feature>
<feature type="region of interest" description="Acidic tract A1" evidence="8">
    <location>
        <begin position="35"/>
        <end position="39"/>
    </location>
</feature>
<feature type="region of interest" description="Disordered" evidence="2">
    <location>
        <begin position="123"/>
        <end position="200"/>
    </location>
</feature>
<feature type="region of interest" description="Acidic tract A2" evidence="8">
    <location>
        <begin position="128"/>
        <end position="148"/>
    </location>
</feature>
<feature type="region of interest" description="Acidic tract A3" evidence="8">
    <location>
        <begin position="174"/>
        <end position="176"/>
    </location>
</feature>
<feature type="short sequence motif" description="Bipartite nuclear localization signal" evidence="3">
    <location>
        <begin position="155"/>
        <end position="170"/>
    </location>
</feature>
<feature type="compositionally biased region" description="Acidic residues" evidence="2">
    <location>
        <begin position="123"/>
        <end position="148"/>
    </location>
</feature>
<feature type="compositionally biased region" description="Basic residues" evidence="2">
    <location>
        <begin position="153"/>
        <end position="170"/>
    </location>
</feature>
<feature type="compositionally biased region" description="Basic residues" evidence="2">
    <location>
        <begin position="185"/>
        <end position="200"/>
    </location>
</feature>
<feature type="site" description="Interaction between pentamers" evidence="4">
    <location>
        <position position="58"/>
    </location>
</feature>
<feature type="site" description="Interaction between pentamers" evidence="4">
    <location>
        <position position="82"/>
    </location>
</feature>
<feature type="modified residue" description="N-acetylalanine" evidence="5">
    <location>
        <position position="2"/>
    </location>
</feature>
<feature type="modified residue" description="Phosphoserine" evidence="5">
    <location>
        <position position="3"/>
    </location>
</feature>
<feature type="modified residue" description="Phosphothreonine" evidence="5">
    <location>
        <position position="4"/>
    </location>
</feature>
<feature type="modified residue" description="Phosphoserine" evidence="5">
    <location>
        <position position="6"/>
    </location>
</feature>
<feature type="modified residue" description="Phosphothreonine" evidence="5">
    <location>
        <position position="8"/>
    </location>
</feature>
<feature type="modified residue" description="Phosphoserine" evidence="5">
    <location>
        <position position="149"/>
    </location>
</feature>
<feature type="modified residue" description="Phosphoserine" evidence="5">
    <location>
        <position position="177"/>
    </location>
</feature>
<feature type="modified residue" description="Phosphoserine" evidence="5">
    <location>
        <position position="178"/>
    </location>
</feature>
<feature type="modified residue" description="Phosphoserine" evidence="5">
    <location>
        <position position="182"/>
    </location>
</feature>
<feature type="modified residue" description="Omega-N-methylarginine; by PRMT5; alternate" evidence="7">
    <location>
        <position position="192"/>
    </location>
</feature>
<feature type="modified residue" description="Symmetric dimethylarginine; by PRMT5; alternate" evidence="7">
    <location>
        <position position="192"/>
    </location>
</feature>
<feature type="mutagenesis site" description="Abolishes arginine methylation." evidence="7">
    <original>R</original>
    <variation>A</variation>
    <location>
        <position position="192"/>
    </location>
</feature>
<feature type="mutagenesis site" description="Reduces arginine methylation." evidence="7">
    <original>R</original>
    <variation>A</variation>
    <location>
        <position position="194"/>
    </location>
</feature>
<feature type="sequence conflict" description="In Ref. 2; CAA68363." evidence="9" ref="2">
    <original>L</original>
    <variation>V</variation>
    <location>
        <position position="11"/>
    </location>
</feature>
<feature type="sequence conflict" description="In Ref. 2; CAA68363." evidence="9" ref="2">
    <original>D</original>
    <variation>N</variation>
    <location>
        <position position="27"/>
    </location>
</feature>
<feature type="sequence conflict" description="In Ref. 2; CAA68363." evidence="9" ref="2">
    <original>E</original>
    <variation>A</variation>
    <location>
        <position position="31"/>
    </location>
</feature>
<feature type="sequence conflict" description="In Ref. 2; CAA68363." evidence="9" ref="2">
    <original>V</original>
    <variation>I</variation>
    <location>
        <position position="34"/>
    </location>
</feature>
<feature type="sequence conflict" description="In Ref. 2; CAA68363." evidence="9" ref="2">
    <original>N</original>
    <variation>H</variation>
    <location>
        <position position="61"/>
    </location>
</feature>
<feature type="sequence conflict" description="In Ref. 2; CAA68363." evidence="9" ref="2">
    <original>A</original>
    <variation>K</variation>
    <location>
        <position position="72"/>
    </location>
</feature>
<feature type="sequence conflict" description="In Ref. 2; CAA68363." evidence="9" ref="2">
    <original>S</original>
    <variation>P</variation>
    <location>
        <position position="75"/>
    </location>
</feature>
<feature type="sequence conflict" description="In Ref. 2; CAA68363." evidence="9" ref="2">
    <original>T</original>
    <variation>S</variation>
    <location>
        <position position="80"/>
    </location>
</feature>
<feature type="sequence conflict" description="In Ref. 2; CAA68363." evidence="9" ref="2">
    <original>L</original>
    <variation>V</variation>
    <location>
        <position position="111"/>
    </location>
</feature>
<feature type="sequence conflict" description="In Ref. 2; CAA68363." evidence="9" ref="2">
    <location>
        <begin position="134"/>
        <end position="137"/>
    </location>
</feature>
<feature type="sequence conflict" description="In Ref. 2; CAA68363." evidence="9" ref="2">
    <original>Q</original>
    <variation>P</variation>
    <location>
        <position position="147"/>
    </location>
</feature>
<feature type="strand" evidence="10">
    <location>
        <begin position="18"/>
        <end position="23"/>
    </location>
</feature>
<feature type="strand" evidence="10">
    <location>
        <begin position="29"/>
        <end position="32"/>
    </location>
</feature>
<feature type="strand" evidence="10">
    <location>
        <begin position="44"/>
        <end position="52"/>
    </location>
</feature>
<feature type="strand" evidence="10">
    <location>
        <begin position="61"/>
        <end position="67"/>
    </location>
</feature>
<feature type="strand" evidence="10">
    <location>
        <begin position="74"/>
        <end position="82"/>
    </location>
</feature>
<feature type="turn" evidence="10">
    <location>
        <begin position="83"/>
        <end position="85"/>
    </location>
</feature>
<feature type="strand" evidence="10">
    <location>
        <begin position="88"/>
        <end position="90"/>
    </location>
</feature>
<feature type="strand" evidence="10">
    <location>
        <begin position="100"/>
        <end position="106"/>
    </location>
</feature>
<feature type="strand" evidence="10">
    <location>
        <begin position="111"/>
        <end position="118"/>
    </location>
</feature>
<sequence length="200" mass="22024">MASTVSNTSKLEKPVSLIWGCELNEQDKTFEFKVEDDEEKCEHQLALRTVCLGDKAKDEFNIVEIVTQEEGAEKSVPIATLKPSILPMATMVGIELTPPVTFRLKAGSGPLYISGQHVAMEEDYSWAEEEDEGEAEGEEEEEEEEDQESPPKAVKRPAATKKAGQAKKKKLDKEDESSEEDSPTKKGKGAGRGRKPAAKK</sequence>
<keyword id="KW-0002">3D-structure</keyword>
<keyword id="KW-0007">Acetylation</keyword>
<keyword id="KW-0143">Chaperone</keyword>
<keyword id="KW-0156">Chromatin regulator</keyword>
<keyword id="KW-0217">Developmental protein</keyword>
<keyword id="KW-0278">Fertilization</keyword>
<keyword id="KW-0488">Methylation</keyword>
<keyword id="KW-0539">Nucleus</keyword>
<keyword id="KW-0597">Phosphoprotein</keyword>
<keyword id="KW-1185">Reference proteome</keyword>